<gene>
    <name evidence="1" type="primary">nadK</name>
    <name type="ordered locus">ETA_09770</name>
</gene>
<dbReference type="EC" id="2.7.1.23" evidence="1"/>
<dbReference type="EMBL" id="CU468135">
    <property type="protein sequence ID" value="CAO96023.1"/>
    <property type="molecule type" value="Genomic_DNA"/>
</dbReference>
<dbReference type="RefSeq" id="WP_012440724.1">
    <property type="nucleotide sequence ID" value="NC_010694.1"/>
</dbReference>
<dbReference type="SMR" id="B2VEC5"/>
<dbReference type="STRING" id="465817.ETA_09770"/>
<dbReference type="KEGG" id="eta:ETA_09770"/>
<dbReference type="eggNOG" id="COG0061">
    <property type="taxonomic scope" value="Bacteria"/>
</dbReference>
<dbReference type="HOGENOM" id="CLU_008831_0_1_6"/>
<dbReference type="OrthoDB" id="9774737at2"/>
<dbReference type="Proteomes" id="UP000001726">
    <property type="component" value="Chromosome"/>
</dbReference>
<dbReference type="GO" id="GO:0005737">
    <property type="term" value="C:cytoplasm"/>
    <property type="evidence" value="ECO:0007669"/>
    <property type="project" value="UniProtKB-SubCell"/>
</dbReference>
<dbReference type="GO" id="GO:0005524">
    <property type="term" value="F:ATP binding"/>
    <property type="evidence" value="ECO:0007669"/>
    <property type="project" value="UniProtKB-KW"/>
</dbReference>
<dbReference type="GO" id="GO:0046872">
    <property type="term" value="F:metal ion binding"/>
    <property type="evidence" value="ECO:0007669"/>
    <property type="project" value="UniProtKB-UniRule"/>
</dbReference>
<dbReference type="GO" id="GO:0051287">
    <property type="term" value="F:NAD binding"/>
    <property type="evidence" value="ECO:0007669"/>
    <property type="project" value="UniProtKB-ARBA"/>
</dbReference>
<dbReference type="GO" id="GO:0003951">
    <property type="term" value="F:NAD+ kinase activity"/>
    <property type="evidence" value="ECO:0007669"/>
    <property type="project" value="UniProtKB-UniRule"/>
</dbReference>
<dbReference type="GO" id="GO:0019674">
    <property type="term" value="P:NAD metabolic process"/>
    <property type="evidence" value="ECO:0007669"/>
    <property type="project" value="InterPro"/>
</dbReference>
<dbReference type="GO" id="GO:0006741">
    <property type="term" value="P:NADP biosynthetic process"/>
    <property type="evidence" value="ECO:0007669"/>
    <property type="project" value="UniProtKB-UniRule"/>
</dbReference>
<dbReference type="FunFam" id="2.60.200.30:FF:000001">
    <property type="entry name" value="NAD kinase"/>
    <property type="match status" value="1"/>
</dbReference>
<dbReference type="FunFam" id="3.40.50.10330:FF:000004">
    <property type="entry name" value="NAD kinase"/>
    <property type="match status" value="1"/>
</dbReference>
<dbReference type="Gene3D" id="3.40.50.10330">
    <property type="entry name" value="Probable inorganic polyphosphate/atp-NAD kinase, domain 1"/>
    <property type="match status" value="1"/>
</dbReference>
<dbReference type="Gene3D" id="2.60.200.30">
    <property type="entry name" value="Probable inorganic polyphosphate/atp-NAD kinase, domain 2"/>
    <property type="match status" value="1"/>
</dbReference>
<dbReference type="HAMAP" id="MF_00361">
    <property type="entry name" value="NAD_kinase"/>
    <property type="match status" value="1"/>
</dbReference>
<dbReference type="InterPro" id="IPR017438">
    <property type="entry name" value="ATP-NAD_kinase_N"/>
</dbReference>
<dbReference type="InterPro" id="IPR017437">
    <property type="entry name" value="ATP-NAD_kinase_PpnK-typ_C"/>
</dbReference>
<dbReference type="InterPro" id="IPR016064">
    <property type="entry name" value="NAD/diacylglycerol_kinase_sf"/>
</dbReference>
<dbReference type="InterPro" id="IPR002504">
    <property type="entry name" value="NADK"/>
</dbReference>
<dbReference type="NCBIfam" id="NF002306">
    <property type="entry name" value="PRK01231.1"/>
    <property type="match status" value="1"/>
</dbReference>
<dbReference type="NCBIfam" id="NF002893">
    <property type="entry name" value="PRK03378.1"/>
    <property type="match status" value="1"/>
</dbReference>
<dbReference type="PANTHER" id="PTHR20275">
    <property type="entry name" value="NAD KINASE"/>
    <property type="match status" value="1"/>
</dbReference>
<dbReference type="PANTHER" id="PTHR20275:SF0">
    <property type="entry name" value="NAD KINASE"/>
    <property type="match status" value="1"/>
</dbReference>
<dbReference type="Pfam" id="PF01513">
    <property type="entry name" value="NAD_kinase"/>
    <property type="match status" value="1"/>
</dbReference>
<dbReference type="Pfam" id="PF20143">
    <property type="entry name" value="NAD_kinase_C"/>
    <property type="match status" value="1"/>
</dbReference>
<dbReference type="SUPFAM" id="SSF111331">
    <property type="entry name" value="NAD kinase/diacylglycerol kinase-like"/>
    <property type="match status" value="1"/>
</dbReference>
<reference key="1">
    <citation type="journal article" date="2008" name="Environ. Microbiol.">
        <title>The genome of Erwinia tasmaniensis strain Et1/99, a non-pathogenic bacterium in the genus Erwinia.</title>
        <authorList>
            <person name="Kube M."/>
            <person name="Migdoll A.M."/>
            <person name="Mueller I."/>
            <person name="Kuhl H."/>
            <person name="Beck A."/>
            <person name="Reinhardt R."/>
            <person name="Geider K."/>
        </authorList>
    </citation>
    <scope>NUCLEOTIDE SEQUENCE [LARGE SCALE GENOMIC DNA]</scope>
    <source>
        <strain>DSM 17950 / CFBP 7177 / CIP 109463 / NCPPB 4357 / Et1/99</strain>
    </source>
</reference>
<feature type="chain" id="PRO_1000120860" description="NAD kinase">
    <location>
        <begin position="1"/>
        <end position="292"/>
    </location>
</feature>
<feature type="active site" description="Proton acceptor" evidence="1">
    <location>
        <position position="73"/>
    </location>
</feature>
<feature type="binding site" evidence="1">
    <location>
        <begin position="73"/>
        <end position="74"/>
    </location>
    <ligand>
        <name>NAD(+)</name>
        <dbReference type="ChEBI" id="CHEBI:57540"/>
    </ligand>
</feature>
<feature type="binding site" evidence="1">
    <location>
        <begin position="147"/>
        <end position="148"/>
    </location>
    <ligand>
        <name>NAD(+)</name>
        <dbReference type="ChEBI" id="CHEBI:57540"/>
    </ligand>
</feature>
<feature type="binding site" evidence="1">
    <location>
        <position position="158"/>
    </location>
    <ligand>
        <name>NAD(+)</name>
        <dbReference type="ChEBI" id="CHEBI:57540"/>
    </ligand>
</feature>
<feature type="binding site" evidence="1">
    <location>
        <position position="175"/>
    </location>
    <ligand>
        <name>NAD(+)</name>
        <dbReference type="ChEBI" id="CHEBI:57540"/>
    </ligand>
</feature>
<feature type="binding site" evidence="1">
    <location>
        <position position="177"/>
    </location>
    <ligand>
        <name>NAD(+)</name>
        <dbReference type="ChEBI" id="CHEBI:57540"/>
    </ligand>
</feature>
<feature type="binding site" evidence="1">
    <location>
        <begin position="188"/>
        <end position="193"/>
    </location>
    <ligand>
        <name>NAD(+)</name>
        <dbReference type="ChEBI" id="CHEBI:57540"/>
    </ligand>
</feature>
<feature type="binding site" evidence="1">
    <location>
        <position position="247"/>
    </location>
    <ligand>
        <name>NAD(+)</name>
        <dbReference type="ChEBI" id="CHEBI:57540"/>
    </ligand>
</feature>
<accession>B2VEC5</accession>
<protein>
    <recommendedName>
        <fullName evidence="1">NAD kinase</fullName>
        <ecNumber evidence="1">2.7.1.23</ecNumber>
    </recommendedName>
    <alternativeName>
        <fullName evidence="1">ATP-dependent NAD kinase</fullName>
    </alternativeName>
</protein>
<name>NADK_ERWT9</name>
<keyword id="KW-0067">ATP-binding</keyword>
<keyword id="KW-0963">Cytoplasm</keyword>
<keyword id="KW-0418">Kinase</keyword>
<keyword id="KW-0520">NAD</keyword>
<keyword id="KW-0521">NADP</keyword>
<keyword id="KW-0547">Nucleotide-binding</keyword>
<keyword id="KW-1185">Reference proteome</keyword>
<keyword id="KW-0808">Transferase</keyword>
<evidence type="ECO:0000255" key="1">
    <source>
        <dbReference type="HAMAP-Rule" id="MF_00361"/>
    </source>
</evidence>
<organism>
    <name type="scientific">Erwinia tasmaniensis (strain DSM 17950 / CFBP 7177 / CIP 109463 / NCPPB 4357 / Et1/99)</name>
    <dbReference type="NCBI Taxonomy" id="465817"/>
    <lineage>
        <taxon>Bacteria</taxon>
        <taxon>Pseudomonadati</taxon>
        <taxon>Pseudomonadota</taxon>
        <taxon>Gammaproteobacteria</taxon>
        <taxon>Enterobacterales</taxon>
        <taxon>Erwiniaceae</taxon>
        <taxon>Erwinia</taxon>
    </lineage>
</organism>
<proteinExistence type="inferred from homology"/>
<sequence length="292" mass="32250">MNKPFSCIGIVGHPRHPTALTTHEMLYRWLTAKGYQVIIEQQIARELKLEGVQTGTLAEIGRTADLAVVVGGDGNMLGAARVLARYDIKVIGINRGNLGFLTDLDPDNAQQQLADVLEGDYFVESRFLLEAQVCRQSGTPRIGTAINEVVLHPGKVAHMIEFEVYIDENFAFSQRSDGLIISTPTGSTAYSLSAGGPILTPSLDAIALVPMFPHTLSARPLVINSSSTIRLRFSHMRSDLEISCDSQIALPIQQSEDVLIRRSDYHLNLIHPKNYNYFNTLSSKLGWSKKLF</sequence>
<comment type="function">
    <text evidence="1">Involved in the regulation of the intracellular balance of NAD and NADP, and is a key enzyme in the biosynthesis of NADP. Catalyzes specifically the phosphorylation on 2'-hydroxyl of the adenosine moiety of NAD to yield NADP.</text>
</comment>
<comment type="catalytic activity">
    <reaction evidence="1">
        <text>NAD(+) + ATP = ADP + NADP(+) + H(+)</text>
        <dbReference type="Rhea" id="RHEA:18629"/>
        <dbReference type="ChEBI" id="CHEBI:15378"/>
        <dbReference type="ChEBI" id="CHEBI:30616"/>
        <dbReference type="ChEBI" id="CHEBI:57540"/>
        <dbReference type="ChEBI" id="CHEBI:58349"/>
        <dbReference type="ChEBI" id="CHEBI:456216"/>
        <dbReference type="EC" id="2.7.1.23"/>
    </reaction>
</comment>
<comment type="cofactor">
    <cofactor evidence="1">
        <name>a divalent metal cation</name>
        <dbReference type="ChEBI" id="CHEBI:60240"/>
    </cofactor>
</comment>
<comment type="subcellular location">
    <subcellularLocation>
        <location evidence="1">Cytoplasm</location>
    </subcellularLocation>
</comment>
<comment type="similarity">
    <text evidence="1">Belongs to the NAD kinase family.</text>
</comment>